<proteinExistence type="inferred from homology"/>
<organism>
    <name type="scientific">Escherichia coli O127:H6 (strain E2348/69 / EPEC)</name>
    <dbReference type="NCBI Taxonomy" id="574521"/>
    <lineage>
        <taxon>Bacteria</taxon>
        <taxon>Pseudomonadati</taxon>
        <taxon>Pseudomonadota</taxon>
        <taxon>Gammaproteobacteria</taxon>
        <taxon>Enterobacterales</taxon>
        <taxon>Enterobacteriaceae</taxon>
        <taxon>Escherichia</taxon>
    </lineage>
</organism>
<evidence type="ECO:0000255" key="1">
    <source>
        <dbReference type="HAMAP-Rule" id="MF_01275"/>
    </source>
</evidence>
<protein>
    <recommendedName>
        <fullName evidence="1">Gamma-aminobutyraldehyde dehydrogenase</fullName>
        <shortName evidence="1">ABALDH</shortName>
        <ecNumber evidence="1">1.2.1.19</ecNumber>
    </recommendedName>
    <alternativeName>
        <fullName evidence="1">1-pyrroline dehydrogenase</fullName>
    </alternativeName>
    <alternativeName>
        <fullName evidence="1">4-aminobutanal dehydrogenase</fullName>
    </alternativeName>
    <alternativeName>
        <fullName evidence="1">5-aminopentanal dehydrogenase</fullName>
        <ecNumber evidence="1">1.2.1.-</ecNumber>
    </alternativeName>
</protein>
<dbReference type="EC" id="1.2.1.19" evidence="1"/>
<dbReference type="EC" id="1.2.1.-" evidence="1"/>
<dbReference type="EMBL" id="FM180568">
    <property type="protein sequence ID" value="CAS09132.1"/>
    <property type="molecule type" value="Genomic_DNA"/>
</dbReference>
<dbReference type="RefSeq" id="WP_001163856.1">
    <property type="nucleotide sequence ID" value="NC_011601.1"/>
</dbReference>
<dbReference type="SMR" id="B7URJ0"/>
<dbReference type="KEGG" id="ecg:E2348C_1584"/>
<dbReference type="HOGENOM" id="CLU_005391_1_0_6"/>
<dbReference type="UniPathway" id="UPA00188">
    <property type="reaction ID" value="UER00292"/>
</dbReference>
<dbReference type="Proteomes" id="UP000008205">
    <property type="component" value="Chromosome"/>
</dbReference>
<dbReference type="GO" id="GO:0019145">
    <property type="term" value="F:aminobutyraldehyde dehydrogenase (NAD+) activity"/>
    <property type="evidence" value="ECO:0007669"/>
    <property type="project" value="UniProtKB-UniRule"/>
</dbReference>
<dbReference type="GO" id="GO:0051287">
    <property type="term" value="F:NAD binding"/>
    <property type="evidence" value="ECO:0007669"/>
    <property type="project" value="UniProtKB-UniRule"/>
</dbReference>
<dbReference type="GO" id="GO:0019477">
    <property type="term" value="P:L-lysine catabolic process"/>
    <property type="evidence" value="ECO:0007669"/>
    <property type="project" value="UniProtKB-UniRule"/>
</dbReference>
<dbReference type="GO" id="GO:0009447">
    <property type="term" value="P:putrescine catabolic process"/>
    <property type="evidence" value="ECO:0007669"/>
    <property type="project" value="UniProtKB-UniRule"/>
</dbReference>
<dbReference type="CDD" id="cd07092">
    <property type="entry name" value="ALDH_ABALDH-YdcW"/>
    <property type="match status" value="1"/>
</dbReference>
<dbReference type="FunFam" id="3.40.605.10:FF:000001">
    <property type="entry name" value="Aldehyde dehydrogenase 1"/>
    <property type="match status" value="1"/>
</dbReference>
<dbReference type="FunFam" id="3.40.309.10:FF:000010">
    <property type="entry name" value="Gamma-aminobutyraldehyde dehydrogenase"/>
    <property type="match status" value="1"/>
</dbReference>
<dbReference type="Gene3D" id="3.40.605.10">
    <property type="entry name" value="Aldehyde Dehydrogenase, Chain A, domain 1"/>
    <property type="match status" value="1"/>
</dbReference>
<dbReference type="Gene3D" id="3.40.309.10">
    <property type="entry name" value="Aldehyde Dehydrogenase, Chain A, domain 2"/>
    <property type="match status" value="1"/>
</dbReference>
<dbReference type="HAMAP" id="MF_01275">
    <property type="entry name" value="Aldedh_Prr"/>
    <property type="match status" value="1"/>
</dbReference>
<dbReference type="InterPro" id="IPR016161">
    <property type="entry name" value="Ald_DH/histidinol_DH"/>
</dbReference>
<dbReference type="InterPro" id="IPR016163">
    <property type="entry name" value="Ald_DH_C"/>
</dbReference>
<dbReference type="InterPro" id="IPR029510">
    <property type="entry name" value="Ald_DH_CS_GLU"/>
</dbReference>
<dbReference type="InterPro" id="IPR016162">
    <property type="entry name" value="Ald_DH_N"/>
</dbReference>
<dbReference type="InterPro" id="IPR015590">
    <property type="entry name" value="Aldehyde_DH_dom"/>
</dbReference>
<dbReference type="InterPro" id="IPR015657">
    <property type="entry name" value="Aminobutyraldehyde_DH"/>
</dbReference>
<dbReference type="InterPro" id="IPR017749">
    <property type="entry name" value="PatD"/>
</dbReference>
<dbReference type="NCBIfam" id="TIGR03374">
    <property type="entry name" value="ABALDH"/>
    <property type="match status" value="1"/>
</dbReference>
<dbReference type="NCBIfam" id="NF010000">
    <property type="entry name" value="PRK13473.1"/>
    <property type="match status" value="1"/>
</dbReference>
<dbReference type="PANTHER" id="PTHR11699">
    <property type="entry name" value="ALDEHYDE DEHYDROGENASE-RELATED"/>
    <property type="match status" value="1"/>
</dbReference>
<dbReference type="Pfam" id="PF00171">
    <property type="entry name" value="Aldedh"/>
    <property type="match status" value="1"/>
</dbReference>
<dbReference type="SUPFAM" id="SSF53720">
    <property type="entry name" value="ALDH-like"/>
    <property type="match status" value="1"/>
</dbReference>
<dbReference type="PROSITE" id="PS00687">
    <property type="entry name" value="ALDEHYDE_DEHYDR_GLU"/>
    <property type="match status" value="1"/>
</dbReference>
<name>ABDH_ECO27</name>
<comment type="function">
    <text evidence="1">Catalyzes the oxidation 4-aminobutanal (gamma-aminobutyraldehyde) to 4-aminobutanoate (gamma-aminobutyrate or GABA). This is the second step in one of two pathways for putrescine degradation, where putrescine is converted into 4-aminobutanoate via 4-aminobutanal. Also functions as a 5-aminopentanal dehydrogenase in a a L-lysine degradation pathway to succinate that proceeds via cadaverine, glutarate and L-2-hydroxyglutarate.</text>
</comment>
<comment type="catalytic activity">
    <reaction evidence="1">
        <text>4-aminobutanal + NAD(+) + H2O = 4-aminobutanoate + NADH + 2 H(+)</text>
        <dbReference type="Rhea" id="RHEA:19105"/>
        <dbReference type="ChEBI" id="CHEBI:15377"/>
        <dbReference type="ChEBI" id="CHEBI:15378"/>
        <dbReference type="ChEBI" id="CHEBI:57540"/>
        <dbReference type="ChEBI" id="CHEBI:57945"/>
        <dbReference type="ChEBI" id="CHEBI:58264"/>
        <dbReference type="ChEBI" id="CHEBI:59888"/>
        <dbReference type="EC" id="1.2.1.19"/>
    </reaction>
    <physiologicalReaction direction="left-to-right" evidence="1">
        <dbReference type="Rhea" id="RHEA:19106"/>
    </physiologicalReaction>
</comment>
<comment type="catalytic activity">
    <reaction evidence="1">
        <text>5-aminopentanal + NAD(+) + H2O = 5-aminopentanoate + NADH + 2 H(+)</text>
        <dbReference type="Rhea" id="RHEA:61632"/>
        <dbReference type="ChEBI" id="CHEBI:15377"/>
        <dbReference type="ChEBI" id="CHEBI:15378"/>
        <dbReference type="ChEBI" id="CHEBI:57540"/>
        <dbReference type="ChEBI" id="CHEBI:57945"/>
        <dbReference type="ChEBI" id="CHEBI:144896"/>
        <dbReference type="ChEBI" id="CHEBI:356010"/>
    </reaction>
    <physiologicalReaction direction="left-to-right" evidence="1">
        <dbReference type="Rhea" id="RHEA:61633"/>
    </physiologicalReaction>
</comment>
<comment type="pathway">
    <text evidence="1">Amine and polyamine degradation; putrescine degradation; 4-aminobutanoate from 4-aminobutanal: step 1/1.</text>
</comment>
<comment type="pathway">
    <text evidence="1">Amino-acid degradation.</text>
</comment>
<comment type="subunit">
    <text evidence="1">Homotetramer.</text>
</comment>
<comment type="miscellaneous">
    <text evidence="1">4-aminobutanal can spontaneously cyclize to 1-pyrroline, and 5-aminopentanal to 1-piperideine.</text>
</comment>
<comment type="similarity">
    <text evidence="1">Belongs to the aldehyde dehydrogenase family. Gamma-aminobutyraldehyde dehydrogenase subfamily.</text>
</comment>
<keyword id="KW-0520">NAD</keyword>
<keyword id="KW-0560">Oxidoreductase</keyword>
<keyword id="KW-1185">Reference proteome</keyword>
<feature type="chain" id="PRO_1000165209" description="Gamma-aminobutyraldehyde dehydrogenase">
    <location>
        <begin position="1"/>
        <end position="474"/>
    </location>
</feature>
<feature type="active site" evidence="1">
    <location>
        <position position="246"/>
    </location>
</feature>
<feature type="active site" description="Nucleophile" evidence="1">
    <location>
        <position position="280"/>
    </location>
</feature>
<feature type="binding site" evidence="1">
    <location>
        <begin position="146"/>
        <end position="148"/>
    </location>
    <ligand>
        <name>NAD(+)</name>
        <dbReference type="ChEBI" id="CHEBI:57540"/>
    </ligand>
</feature>
<feature type="binding site" evidence="1">
    <location>
        <begin position="172"/>
        <end position="175"/>
    </location>
    <ligand>
        <name>NAD(+)</name>
        <dbReference type="ChEBI" id="CHEBI:57540"/>
    </ligand>
</feature>
<feature type="binding site" evidence="1">
    <location>
        <position position="209"/>
    </location>
    <ligand>
        <name>NAD(+)</name>
        <dbReference type="ChEBI" id="CHEBI:57540"/>
    </ligand>
</feature>
<feature type="binding site" evidence="1">
    <location>
        <begin position="225"/>
        <end position="228"/>
    </location>
    <ligand>
        <name>NAD(+)</name>
        <dbReference type="ChEBI" id="CHEBI:57540"/>
    </ligand>
</feature>
<feature type="binding site" evidence="1">
    <location>
        <position position="280"/>
    </location>
    <ligand>
        <name>NAD(+)</name>
        <dbReference type="ChEBI" id="CHEBI:57540"/>
    </ligand>
</feature>
<reference key="1">
    <citation type="journal article" date="2009" name="J. Bacteriol.">
        <title>Complete genome sequence and comparative genome analysis of enteropathogenic Escherichia coli O127:H6 strain E2348/69.</title>
        <authorList>
            <person name="Iguchi A."/>
            <person name="Thomson N.R."/>
            <person name="Ogura Y."/>
            <person name="Saunders D."/>
            <person name="Ooka T."/>
            <person name="Henderson I.R."/>
            <person name="Harris D."/>
            <person name="Asadulghani M."/>
            <person name="Kurokawa K."/>
            <person name="Dean P."/>
            <person name="Kenny B."/>
            <person name="Quail M.A."/>
            <person name="Thurston S."/>
            <person name="Dougan G."/>
            <person name="Hayashi T."/>
            <person name="Parkhill J."/>
            <person name="Frankel G."/>
        </authorList>
    </citation>
    <scope>NUCLEOTIDE SEQUENCE [LARGE SCALE GENOMIC DNA]</scope>
    <source>
        <strain>E2348/69 / EPEC</strain>
    </source>
</reference>
<gene>
    <name evidence="1" type="primary">patD</name>
    <name type="ordered locus">E2348C_1584</name>
</gene>
<sequence length="474" mass="50889">MQHKLLINGELVSGEGEKQPVYNPAMGDVLLEIAEASAEQVNAAVRAADAAFAEWGQTTPKARAECLLKLADVIEENGQVFAELESRNCGKPLHSAFNDEIPAIVDVFRFFAGAARCLNGLAAGEYLEGHTSMIRRDPLGVVASIAPWNYPLMMAAWKLAPALAAGNCVVLKPSEITPLTALKLAELAKDIFPAGVINVLFGRGKTVGDPLTGHPKVRMVSLTGSIATGEHIISHTAPSIKRTHMELGGKAPVIVFDDADIEAVVEGVRTFGYYNAGQDCTAACRIYAQKGIYDTLVEKLGAAVATLKSGSPDDESTELGPLSSLAHLERVSKAVEEAKATGHIKVITGGEKRKGNGYYYAPTLLAGALQDDAIVQKEVFGPVVSVTLFDNEEQVVNWANDSQYGLASSVWTKDVGRAHRVSARLQYGCTWVNTHFMLVSEMPHGGQKLSGYGKDMSLYGLEDYTVVRHVMVKH</sequence>
<accession>B7URJ0</accession>